<accession>P21085</accession>
<gene>
    <name type="ORF">E ORF A</name>
</gene>
<reference key="1">
    <citation type="journal article" date="1990" name="Virology">
        <title>The complete DNA sequence of vaccinia virus.</title>
        <authorList>
            <person name="Goebel S.J."/>
            <person name="Johnson G.P."/>
            <person name="Perkus M.E."/>
            <person name="Davis S.W."/>
            <person name="Winslow J.P."/>
            <person name="Paoletti E."/>
        </authorList>
    </citation>
    <scope>NUCLEOTIDE SEQUENCE [LARGE SCALE GENOMIC DNA]</scope>
</reference>
<reference key="2">
    <citation type="journal article" date="1990" name="Virology">
        <title>Appendix to 'The complete DNA sequence of vaccinia virus'.</title>
        <authorList>
            <person name="Goebel S.J."/>
            <person name="Johnson G.P."/>
            <person name="Perkus M.E."/>
            <person name="Davis S.W."/>
            <person name="Winslow J.P."/>
            <person name="Paoletti E."/>
        </authorList>
    </citation>
    <scope>COMPLETE GENOME</scope>
</reference>
<keyword id="KW-1185">Reference proteome</keyword>
<feature type="chain" id="PRO_0000099705" description="Uncharacterized 7.6 kDa protein">
    <location>
        <begin position="1"/>
        <end position="71"/>
    </location>
</feature>
<name>YVEA_VACCC</name>
<organismHost>
    <name type="scientific">Homo sapiens</name>
    <name type="common">Human</name>
    <dbReference type="NCBI Taxonomy" id="9606"/>
</organismHost>
<protein>
    <recommendedName>
        <fullName>Uncharacterized 7.6 kDa protein</fullName>
    </recommendedName>
</protein>
<proteinExistence type="predicted"/>
<dbReference type="EMBL" id="M35027">
    <property type="protein sequence ID" value="AAA48037.1"/>
    <property type="molecule type" value="Genomic_DNA"/>
</dbReference>
<dbReference type="Proteomes" id="UP000008269">
    <property type="component" value="Segment"/>
</dbReference>
<organism>
    <name type="scientific">Vaccinia virus (strain Copenhagen)</name>
    <name type="common">VACV</name>
    <dbReference type="NCBI Taxonomy" id="10249"/>
    <lineage>
        <taxon>Viruses</taxon>
        <taxon>Varidnaviria</taxon>
        <taxon>Bamfordvirae</taxon>
        <taxon>Nucleocytoviricota</taxon>
        <taxon>Pokkesviricetes</taxon>
        <taxon>Chitovirales</taxon>
        <taxon>Poxviridae</taxon>
        <taxon>Chordopoxvirinae</taxon>
        <taxon>Orthopoxvirus</taxon>
        <taxon>Vaccinia virus</taxon>
    </lineage>
</organism>
<sequence length="71" mass="7580">MSVLINGTCFPGLFILSHLDGDEGLLSHAGDEGLSTLSTQEALLPSHSTVLTSHTLTAFRTRYLPSLVLII</sequence>